<feature type="chain" id="PRO_1000195666" description="Large ribosomal subunit protein uL11">
    <location>
        <begin position="1"/>
        <end position="149"/>
    </location>
</feature>
<keyword id="KW-0488">Methylation</keyword>
<keyword id="KW-0687">Ribonucleoprotein</keyword>
<keyword id="KW-0689">Ribosomal protein</keyword>
<keyword id="KW-0694">RNA-binding</keyword>
<keyword id="KW-0699">rRNA-binding</keyword>
<name>RL11_METC4</name>
<protein>
    <recommendedName>
        <fullName evidence="1">Large ribosomal subunit protein uL11</fullName>
    </recommendedName>
    <alternativeName>
        <fullName evidence="2">50S ribosomal protein L11</fullName>
    </alternativeName>
</protein>
<organism>
    <name type="scientific">Methylorubrum extorquens (strain CM4 / NCIMB 13688)</name>
    <name type="common">Methylobacterium extorquens</name>
    <dbReference type="NCBI Taxonomy" id="440085"/>
    <lineage>
        <taxon>Bacteria</taxon>
        <taxon>Pseudomonadati</taxon>
        <taxon>Pseudomonadota</taxon>
        <taxon>Alphaproteobacteria</taxon>
        <taxon>Hyphomicrobiales</taxon>
        <taxon>Methylobacteriaceae</taxon>
        <taxon>Methylorubrum</taxon>
    </lineage>
</organism>
<evidence type="ECO:0000255" key="1">
    <source>
        <dbReference type="HAMAP-Rule" id="MF_00736"/>
    </source>
</evidence>
<evidence type="ECO:0000305" key="2"/>
<comment type="function">
    <text evidence="1">Forms part of the ribosomal stalk which helps the ribosome interact with GTP-bound translation factors.</text>
</comment>
<comment type="subunit">
    <text evidence="1">Part of the ribosomal stalk of the 50S ribosomal subunit. Interacts with L10 and the large rRNA to form the base of the stalk. L10 forms an elongated spine to which L12 dimers bind in a sequential fashion forming a multimeric L10(L12)X complex.</text>
</comment>
<comment type="PTM">
    <text evidence="1">One or more lysine residues are methylated.</text>
</comment>
<comment type="similarity">
    <text evidence="1">Belongs to the universal ribosomal protein uL11 family.</text>
</comment>
<accession>B7KN26</accession>
<reference key="1">
    <citation type="submission" date="2008-12" db="EMBL/GenBank/DDBJ databases">
        <title>Complete sequence of chromosome of Methylobacterium chloromethanicum CM4.</title>
        <authorList>
            <consortium name="US DOE Joint Genome Institute"/>
            <person name="Lucas S."/>
            <person name="Copeland A."/>
            <person name="Lapidus A."/>
            <person name="Glavina del Rio T."/>
            <person name="Dalin E."/>
            <person name="Tice H."/>
            <person name="Bruce D."/>
            <person name="Goodwin L."/>
            <person name="Pitluck S."/>
            <person name="Chertkov O."/>
            <person name="Brettin T."/>
            <person name="Detter J.C."/>
            <person name="Han C."/>
            <person name="Larimer F."/>
            <person name="Land M."/>
            <person name="Hauser L."/>
            <person name="Kyrpides N."/>
            <person name="Mikhailova N."/>
            <person name="Marx C."/>
            <person name="Richardson P."/>
        </authorList>
    </citation>
    <scope>NUCLEOTIDE SEQUENCE [LARGE SCALE GENOMIC DNA]</scope>
    <source>
        <strain>CM4 / NCIMB 13688</strain>
    </source>
</reference>
<proteinExistence type="inferred from homology"/>
<gene>
    <name evidence="1" type="primary">rplK</name>
    <name type="ordered locus">Mchl_4367</name>
</gene>
<dbReference type="EMBL" id="CP001298">
    <property type="protein sequence ID" value="ACK85143.1"/>
    <property type="molecule type" value="Genomic_DNA"/>
</dbReference>
<dbReference type="RefSeq" id="WP_003597508.1">
    <property type="nucleotide sequence ID" value="NC_011757.1"/>
</dbReference>
<dbReference type="SMR" id="B7KN26"/>
<dbReference type="GeneID" id="72991716"/>
<dbReference type="KEGG" id="mch:Mchl_4367"/>
<dbReference type="HOGENOM" id="CLU_074237_2_0_5"/>
<dbReference type="Proteomes" id="UP000002385">
    <property type="component" value="Chromosome"/>
</dbReference>
<dbReference type="GO" id="GO:0022625">
    <property type="term" value="C:cytosolic large ribosomal subunit"/>
    <property type="evidence" value="ECO:0007669"/>
    <property type="project" value="TreeGrafter"/>
</dbReference>
<dbReference type="GO" id="GO:0070180">
    <property type="term" value="F:large ribosomal subunit rRNA binding"/>
    <property type="evidence" value="ECO:0007669"/>
    <property type="project" value="UniProtKB-UniRule"/>
</dbReference>
<dbReference type="GO" id="GO:0003735">
    <property type="term" value="F:structural constituent of ribosome"/>
    <property type="evidence" value="ECO:0007669"/>
    <property type="project" value="InterPro"/>
</dbReference>
<dbReference type="GO" id="GO:0006412">
    <property type="term" value="P:translation"/>
    <property type="evidence" value="ECO:0007669"/>
    <property type="project" value="UniProtKB-UniRule"/>
</dbReference>
<dbReference type="CDD" id="cd00349">
    <property type="entry name" value="Ribosomal_L11"/>
    <property type="match status" value="1"/>
</dbReference>
<dbReference type="FunFam" id="3.30.1550.10:FF:000001">
    <property type="entry name" value="50S ribosomal protein L11"/>
    <property type="match status" value="1"/>
</dbReference>
<dbReference type="Gene3D" id="1.10.10.250">
    <property type="entry name" value="Ribosomal protein L11, C-terminal domain"/>
    <property type="match status" value="1"/>
</dbReference>
<dbReference type="Gene3D" id="3.30.1550.10">
    <property type="entry name" value="Ribosomal protein L11/L12, N-terminal domain"/>
    <property type="match status" value="1"/>
</dbReference>
<dbReference type="HAMAP" id="MF_00736">
    <property type="entry name" value="Ribosomal_uL11"/>
    <property type="match status" value="1"/>
</dbReference>
<dbReference type="InterPro" id="IPR000911">
    <property type="entry name" value="Ribosomal_uL11"/>
</dbReference>
<dbReference type="InterPro" id="IPR006519">
    <property type="entry name" value="Ribosomal_uL11_bac-typ"/>
</dbReference>
<dbReference type="InterPro" id="IPR020783">
    <property type="entry name" value="Ribosomal_uL11_C"/>
</dbReference>
<dbReference type="InterPro" id="IPR036769">
    <property type="entry name" value="Ribosomal_uL11_C_sf"/>
</dbReference>
<dbReference type="InterPro" id="IPR020784">
    <property type="entry name" value="Ribosomal_uL11_N"/>
</dbReference>
<dbReference type="InterPro" id="IPR036796">
    <property type="entry name" value="Ribosomal_uL11_N_sf"/>
</dbReference>
<dbReference type="NCBIfam" id="TIGR01632">
    <property type="entry name" value="L11_bact"/>
    <property type="match status" value="1"/>
</dbReference>
<dbReference type="PANTHER" id="PTHR11661">
    <property type="entry name" value="60S RIBOSOMAL PROTEIN L12"/>
    <property type="match status" value="1"/>
</dbReference>
<dbReference type="PANTHER" id="PTHR11661:SF1">
    <property type="entry name" value="LARGE RIBOSOMAL SUBUNIT PROTEIN UL11M"/>
    <property type="match status" value="1"/>
</dbReference>
<dbReference type="Pfam" id="PF00298">
    <property type="entry name" value="Ribosomal_L11"/>
    <property type="match status" value="1"/>
</dbReference>
<dbReference type="Pfam" id="PF03946">
    <property type="entry name" value="Ribosomal_L11_N"/>
    <property type="match status" value="1"/>
</dbReference>
<dbReference type="SMART" id="SM00649">
    <property type="entry name" value="RL11"/>
    <property type="match status" value="1"/>
</dbReference>
<dbReference type="SUPFAM" id="SSF54747">
    <property type="entry name" value="Ribosomal L11/L12e N-terminal domain"/>
    <property type="match status" value="1"/>
</dbReference>
<dbReference type="SUPFAM" id="SSF46906">
    <property type="entry name" value="Ribosomal protein L11, C-terminal domain"/>
    <property type="match status" value="1"/>
</dbReference>
<sequence>MAKKITGYVKLQVPAGAANPSPPIGPALGQRGLNIMEFCKAFNAKTAQMEKGTPIPVIITAYQDRSFTFEMKQPPVTFFLKKAVGLKIGKKPASGSKTPGKGPTVGKITEAQLREIAEKKMPDLNCDSVDAAVAMIRGSARAMGLEVVA</sequence>